<reference key="1">
    <citation type="journal article" date="1997" name="DNA Res.">
        <title>Structural analysis of Arabidopsis thaliana chromosome 5. I. Sequence features of the 1.6 Mb regions covered by twenty physically assigned P1 clones.</title>
        <authorList>
            <person name="Sato S."/>
            <person name="Kotani H."/>
            <person name="Nakamura Y."/>
            <person name="Kaneko T."/>
            <person name="Asamizu E."/>
            <person name="Fukami M."/>
            <person name="Miyajima N."/>
            <person name="Tabata S."/>
        </authorList>
    </citation>
    <scope>NUCLEOTIDE SEQUENCE [LARGE SCALE GENOMIC DNA]</scope>
    <source>
        <strain>cv. Columbia</strain>
    </source>
</reference>
<reference key="2">
    <citation type="journal article" date="2017" name="Plant J.">
        <title>Araport11: a complete reannotation of the Arabidopsis thaliana reference genome.</title>
        <authorList>
            <person name="Cheng C.Y."/>
            <person name="Krishnakumar V."/>
            <person name="Chan A.P."/>
            <person name="Thibaud-Nissen F."/>
            <person name="Schobel S."/>
            <person name="Town C.D."/>
        </authorList>
    </citation>
    <scope>GENOME REANNOTATION</scope>
    <source>
        <strain>cv. Columbia</strain>
    </source>
</reference>
<gene>
    <name type="primary">APC1</name>
    <name type="synonym">EMB2771</name>
    <name type="ordered locus">At5g05560</name>
    <name type="ORF">MOP10.10</name>
</gene>
<dbReference type="EMBL" id="AB005241">
    <property type="protein sequence ID" value="BAB11545.1"/>
    <property type="molecule type" value="Genomic_DNA"/>
</dbReference>
<dbReference type="EMBL" id="CP002688">
    <property type="status" value="NOT_ANNOTATED_CDS"/>
    <property type="molecule type" value="Genomic_DNA"/>
</dbReference>
<dbReference type="SMR" id="Q9FFF9"/>
<dbReference type="BioGRID" id="15718">
    <property type="interactions" value="13"/>
</dbReference>
<dbReference type="FunCoup" id="Q9FFF9">
    <property type="interactions" value="2937"/>
</dbReference>
<dbReference type="IntAct" id="Q9FFF9">
    <property type="interactions" value="13"/>
</dbReference>
<dbReference type="STRING" id="3702.Q9FFF9"/>
<dbReference type="GlyGen" id="Q9FFF9">
    <property type="glycosylation" value="1 site"/>
</dbReference>
<dbReference type="PaxDb" id="3702-AT5G05560.1"/>
<dbReference type="Araport" id="AT5G05560"/>
<dbReference type="TAIR" id="AT5G05560">
    <property type="gene designation" value="EMB2771"/>
</dbReference>
<dbReference type="eggNOG" id="KOG1858">
    <property type="taxonomic scope" value="Eukaryota"/>
</dbReference>
<dbReference type="HOGENOM" id="CLU_001202_1_0_1"/>
<dbReference type="InParanoid" id="Q9FFF9"/>
<dbReference type="PhylomeDB" id="Q9FFF9"/>
<dbReference type="UniPathway" id="UPA00143"/>
<dbReference type="PRO" id="PR:Q9FFF9"/>
<dbReference type="Proteomes" id="UP000006548">
    <property type="component" value="Chromosome 5"/>
</dbReference>
<dbReference type="ExpressionAtlas" id="Q9FFF9">
    <property type="expression patterns" value="baseline and differential"/>
</dbReference>
<dbReference type="GO" id="GO:0005680">
    <property type="term" value="C:anaphase-promoting complex"/>
    <property type="evidence" value="ECO:0000318"/>
    <property type="project" value="GO_Central"/>
</dbReference>
<dbReference type="GO" id="GO:0060090">
    <property type="term" value="F:molecular adaptor activity"/>
    <property type="evidence" value="ECO:0000318"/>
    <property type="project" value="GO_Central"/>
</dbReference>
<dbReference type="GO" id="GO:0031145">
    <property type="term" value="P:anaphase-promoting complex-dependent catabolic process"/>
    <property type="evidence" value="ECO:0000318"/>
    <property type="project" value="GO_Central"/>
</dbReference>
<dbReference type="GO" id="GO:0051301">
    <property type="term" value="P:cell division"/>
    <property type="evidence" value="ECO:0007669"/>
    <property type="project" value="UniProtKB-KW"/>
</dbReference>
<dbReference type="GO" id="GO:0009793">
    <property type="term" value="P:embryo development ending in seed dormancy"/>
    <property type="evidence" value="ECO:0000315"/>
    <property type="project" value="TAIR"/>
</dbReference>
<dbReference type="GO" id="GO:0009553">
    <property type="term" value="P:embryo sac development"/>
    <property type="evidence" value="ECO:0000315"/>
    <property type="project" value="TAIR"/>
</dbReference>
<dbReference type="GO" id="GO:0007091">
    <property type="term" value="P:metaphase/anaphase transition of mitotic cell cycle"/>
    <property type="evidence" value="ECO:0000318"/>
    <property type="project" value="GO_Central"/>
</dbReference>
<dbReference type="GO" id="GO:0048481">
    <property type="term" value="P:plant ovule development"/>
    <property type="evidence" value="ECO:0000315"/>
    <property type="project" value="TAIR"/>
</dbReference>
<dbReference type="GO" id="GO:0070979">
    <property type="term" value="P:protein K11-linked ubiquitination"/>
    <property type="evidence" value="ECO:0000318"/>
    <property type="project" value="GO_Central"/>
</dbReference>
<dbReference type="FunFam" id="1.25.10.10:FF:000211">
    <property type="entry name" value="Anaphase-promoting complex subunit 1"/>
    <property type="match status" value="1"/>
</dbReference>
<dbReference type="FunFam" id="1.25.10.10:FF:000338">
    <property type="entry name" value="Anaphase-promoting complex subunit 1"/>
    <property type="match status" value="1"/>
</dbReference>
<dbReference type="Gene3D" id="1.25.10.10">
    <property type="entry name" value="Leucine-rich Repeat Variant"/>
    <property type="match status" value="2"/>
</dbReference>
<dbReference type="InterPro" id="IPR024990">
    <property type="entry name" value="Apc1"/>
</dbReference>
<dbReference type="InterPro" id="IPR048971">
    <property type="entry name" value="Apc1_3rd"/>
</dbReference>
<dbReference type="InterPro" id="IPR041221">
    <property type="entry name" value="APC1_C"/>
</dbReference>
<dbReference type="InterPro" id="IPR046794">
    <property type="entry name" value="Apc1_MidN"/>
</dbReference>
<dbReference type="InterPro" id="IPR049255">
    <property type="entry name" value="Apc1_N"/>
</dbReference>
<dbReference type="InterPro" id="IPR011989">
    <property type="entry name" value="ARM-like"/>
</dbReference>
<dbReference type="PANTHER" id="PTHR12827:SF3">
    <property type="entry name" value="ANAPHASE-PROMOTING COMPLEX SUBUNIT 1"/>
    <property type="match status" value="1"/>
</dbReference>
<dbReference type="PANTHER" id="PTHR12827">
    <property type="entry name" value="MEIOTIC CHECKPOINT REGULATOR TSG24 FAMILY MEMBER"/>
    <property type="match status" value="1"/>
</dbReference>
<dbReference type="Pfam" id="PF12859">
    <property type="entry name" value="ANAPC1"/>
    <property type="match status" value="2"/>
</dbReference>
<dbReference type="Pfam" id="PF21282">
    <property type="entry name" value="APC1_3rd"/>
    <property type="match status" value="1"/>
</dbReference>
<dbReference type="Pfam" id="PF18122">
    <property type="entry name" value="APC1_C"/>
    <property type="match status" value="1"/>
</dbReference>
<dbReference type="Pfam" id="PF20518">
    <property type="entry name" value="Apc1_MidN"/>
    <property type="match status" value="2"/>
</dbReference>
<organism>
    <name type="scientific">Arabidopsis thaliana</name>
    <name type="common">Mouse-ear cress</name>
    <dbReference type="NCBI Taxonomy" id="3702"/>
    <lineage>
        <taxon>Eukaryota</taxon>
        <taxon>Viridiplantae</taxon>
        <taxon>Streptophyta</taxon>
        <taxon>Embryophyta</taxon>
        <taxon>Tracheophyta</taxon>
        <taxon>Spermatophyta</taxon>
        <taxon>Magnoliopsida</taxon>
        <taxon>eudicotyledons</taxon>
        <taxon>Gunneridae</taxon>
        <taxon>Pentapetalae</taxon>
        <taxon>rosids</taxon>
        <taxon>malvids</taxon>
        <taxon>Brassicales</taxon>
        <taxon>Brassicaceae</taxon>
        <taxon>Camelineae</taxon>
        <taxon>Arabidopsis</taxon>
    </lineage>
</organism>
<keyword id="KW-0131">Cell cycle</keyword>
<keyword id="KW-0132">Cell division</keyword>
<keyword id="KW-0498">Mitosis</keyword>
<keyword id="KW-0539">Nucleus</keyword>
<keyword id="KW-1185">Reference proteome</keyword>
<keyword id="KW-0677">Repeat</keyword>
<keyword id="KW-0833">Ubl conjugation pathway</keyword>
<sequence>MPPGVRQLTVLGKFKPFGLIAEATDGKSPDDSYQYFLFDPELTGERDDADGNDANFSRQREHELFIRDNCNVRKGYALVEANFIGYWYNACWSNLGRGTEAFLCVLQIACLTIYNTSGEVVSVPLMRTVKSIWPLPCGLLLEQAGEVNPPSHVPFSPVSPILGSREMLRQRKEVGNSSPQNFHSPVAHDLISKRDMPCMSSHLILRDPLEEPGPTYVEERGKLTIMKDYDERTIWTSDRLPLMTSYNKGKMQHSVWAAEFIESNLEASASCSSGIVPDAVLSKRVSFRRIWQAKGAKKAASKVFLATDNSVPVICFLILEQKKLLSVGLQTVEINNEILFDVKPDISWSVSAIAAAPVVVTRSQVKIGLLPHLDIIVLSPENDLFLYSGKQCLCRYVLPSWLGESIGSGDGESAKTDSGFRNLKITGLSDAVLGSINLSVNHSQIFRCALTGKPSSSLANDCIAAIAEGLRSDLYSLFLSLLWGDGHSDLQGSSIHFEWEALCNIFLEICQKPTVVHRKQPKTASESSWEFLLISKFHKTYSRFHNGITSINRLDLEGIVPFDSKICSEETLGSSCELMVQSLDCLHAVYESLKMDNLRKQDLHHLAVLLCNIAKFLDEKCYLDYYIRDFPRLSTTIGACTTLSSSRKPPNLFRWLENCLRRGCLSTNFDDLPDLIRRDGCSIVSWARKVVSFYSVLFGDKPEGRTLSSGVPCNIAPGSYSCNEELTILAMAGERFGLHQLDLLPSGVSLPLRHALDSCRESPPADWPAIAYVLLGREDMALSVFRNFSSSKEFEMQSNTSLISMSIPYMLHLHPVIVPSSESIGLENTKIEDTNSVDGSVIDGMEHIFNSYTQLRYGRDLRLNEVRRLLCSARPVVVQTAANPTISDQEQQQAFTVPKLVLAGRLPSQQNAIVNLDPNIRNIQELKTWPEFHNAVAAGLRLAPLQGKVSRTWIRYNKPGEPNAVHAGLLFGLGLQGYLHVLNLSDIYQYFTQDHESTTVGLMLGLAASYRGTMQPDIAKALFFHVPARYQASYTEFEIPTLLQSAALVSVGMLFEGSAHQQTMQLLLGEIGRRSAGDNVLEREGYAVSAGFSLGLVALGRGGDALGSMDSLVNRLLLYLGAKEERSILVPSLEDHRSAAQITDGSTSNVDITAPGAIIALTLMYLKTESEVIFSKLSIPQTHYDLECVRPDFIMLRVIARNLIMWSRICPTCDWIQSQVPEVVKNGISQLRDDMDNMYEVDVEALVQAYVNIVAGACISLGLRFAGTRDGNARDLLNSYALYLLNEIKPLSATPGNAFPRGISKFVDRGTLEMCLYLIIISLSVVMAGSGDLQVFRLLRFLRSRNSADGHANYGTQMAVSLATGFLFLGGGMRTFSTNNGSLAMLLITLYPRLPSGPNDNRCHLQAFRHLYVLATEARWLQTIDVDSGLPVYAPLEVTVKETKLYSETKFCEITPCILPERAILKRICVCGPRYWPQQIELVFGLRTLGESNLIANSHRELDSDSVDHLVSTFSSDPSLIAFAQLCCDKSWNNSFDFLILDLILWSQVALAYNEAVSTGRLASSGGFVQSIFLASLRKRCEEVLNCSTELKINLRNYLTSEAWPYDKNSKLQKDIIILSWYLKWFNVPSPSIIKAAVEKIKSKSKNSTSAIPLLRLLLPNTHISVIGEIDRVFFPSN</sequence>
<evidence type="ECO:0000250" key="1"/>
<evidence type="ECO:0000305" key="2"/>
<feature type="chain" id="PRO_0000396837" description="Anaphase-promoting complex subunit 1">
    <location>
        <begin position="1"/>
        <end position="1678"/>
    </location>
</feature>
<feature type="repeat" description="PC 1">
    <location>
        <begin position="1089"/>
        <end position="1116"/>
    </location>
</feature>
<feature type="repeat" description="PC 2">
    <location>
        <begin position="1156"/>
        <end position="1194"/>
    </location>
</feature>
<feature type="repeat" description="PC 3">
    <location>
        <begin position="1256"/>
        <end position="1293"/>
    </location>
</feature>
<feature type="repeat" description="PC 4">
    <location>
        <begin position="1320"/>
        <end position="1354"/>
    </location>
</feature>
<comment type="function">
    <text evidence="1">Component of the anaphase promoting complex/cyclosome (APC/C), a cell cycle-regulated E3 ubiquitin-protein ligase complex that controls progression through mitosis and the G1 phase of the cell cycle. The APC/C complex controls several key steps in the cell cycle by mediating ubiquitination and subsequent degradation of target proteins such as cyclins. The APC/C complex is required for the female gametophyte development and is involved in several aspect of development by controlling cell division and cell elongation. Involved in the control of endoreduplication (By similarity).</text>
</comment>
<comment type="pathway">
    <text>Protein modification; protein ubiquitination.</text>
</comment>
<comment type="subunit">
    <text evidence="1">The APC/C is composed of at least 10 subunits.</text>
</comment>
<comment type="subcellular location">
    <subcellularLocation>
        <location evidence="1">Nucleus</location>
    </subcellularLocation>
</comment>
<comment type="similarity">
    <text evidence="2">Belongs to the APC1 family.</text>
</comment>
<accession>Q9FFF9</accession>
<proteinExistence type="evidence at transcript level"/>
<protein>
    <recommendedName>
        <fullName>Anaphase-promoting complex subunit 1</fullName>
    </recommendedName>
    <alternativeName>
        <fullName>Cyclosome subunit 1</fullName>
    </alternativeName>
    <alternativeName>
        <fullName>Protein EMBRYO DEFECTIVE 2771</fullName>
    </alternativeName>
</protein>
<name>APC1_ARATH</name>